<gene>
    <name evidence="1" type="primary">psd</name>
    <name type="ordered locus">Sbal_0549</name>
</gene>
<proteinExistence type="inferred from homology"/>
<dbReference type="EC" id="4.1.1.65" evidence="1"/>
<dbReference type="EMBL" id="CP000563">
    <property type="protein sequence ID" value="ABN60078.1"/>
    <property type="molecule type" value="Genomic_DNA"/>
</dbReference>
<dbReference type="RefSeq" id="WP_011845719.1">
    <property type="nucleotide sequence ID" value="NC_009052.1"/>
</dbReference>
<dbReference type="SMR" id="A3D015"/>
<dbReference type="STRING" id="325240.Sbal_0549"/>
<dbReference type="KEGG" id="sbl:Sbal_0549"/>
<dbReference type="HOGENOM" id="CLU_029061_4_1_6"/>
<dbReference type="OrthoDB" id="9802030at2"/>
<dbReference type="UniPathway" id="UPA00558">
    <property type="reaction ID" value="UER00616"/>
</dbReference>
<dbReference type="Proteomes" id="UP000001557">
    <property type="component" value="Chromosome"/>
</dbReference>
<dbReference type="GO" id="GO:0005886">
    <property type="term" value="C:plasma membrane"/>
    <property type="evidence" value="ECO:0007669"/>
    <property type="project" value="UniProtKB-SubCell"/>
</dbReference>
<dbReference type="GO" id="GO:0004609">
    <property type="term" value="F:phosphatidylserine decarboxylase activity"/>
    <property type="evidence" value="ECO:0007669"/>
    <property type="project" value="UniProtKB-UniRule"/>
</dbReference>
<dbReference type="GO" id="GO:0006646">
    <property type="term" value="P:phosphatidylethanolamine biosynthetic process"/>
    <property type="evidence" value="ECO:0007669"/>
    <property type="project" value="UniProtKB-UniRule"/>
</dbReference>
<dbReference type="HAMAP" id="MF_00662">
    <property type="entry name" value="PS_decarb_PSD_B_type1"/>
    <property type="match status" value="1"/>
</dbReference>
<dbReference type="InterPro" id="IPR003817">
    <property type="entry name" value="PS_Dcarbxylase"/>
</dbReference>
<dbReference type="InterPro" id="IPR033177">
    <property type="entry name" value="PSD-B"/>
</dbReference>
<dbReference type="InterPro" id="IPR033178">
    <property type="entry name" value="PSD_type1_pro"/>
</dbReference>
<dbReference type="NCBIfam" id="TIGR00163">
    <property type="entry name" value="PS_decarb"/>
    <property type="match status" value="1"/>
</dbReference>
<dbReference type="PANTHER" id="PTHR10067">
    <property type="entry name" value="PHOSPHATIDYLSERINE DECARBOXYLASE"/>
    <property type="match status" value="1"/>
</dbReference>
<dbReference type="PANTHER" id="PTHR10067:SF6">
    <property type="entry name" value="PHOSPHATIDYLSERINE DECARBOXYLASE PROENZYME, MITOCHONDRIAL"/>
    <property type="match status" value="1"/>
</dbReference>
<dbReference type="Pfam" id="PF02666">
    <property type="entry name" value="PS_Dcarbxylase"/>
    <property type="match status" value="1"/>
</dbReference>
<name>PSD_SHEB5</name>
<sequence length="292" mass="31850">MDKVKIALQYMLPKHLLSRLVGKLAAAEAGALTTAAIKWFIKQYKIDMSEAAQSEPEAYKSFNAFFTRALKPGIRPLDMDADIMVHPVDGAVSQLGPIKNGRIFQAKGHHYSSLTLLGDQAEDAKRFEGGDFATIYLAPKDYHRIHMPIKGTLSKMTYVPGELFSVNPLTARNVPGLFARNERVVAIFETELGPLAMVLVGATIVASIETVWAGTVTPPTGKQVFTWEYPTQGPDAITLDKGEEMGRFKLGSTVVMLFAKDAIATFAEGVEAEAVTRMGQAFANLKDVKQAD</sequence>
<comment type="function">
    <text evidence="1">Catalyzes the formation of phosphatidylethanolamine (PtdEtn) from phosphatidylserine (PtdSer).</text>
</comment>
<comment type="catalytic activity">
    <reaction evidence="1">
        <text>a 1,2-diacyl-sn-glycero-3-phospho-L-serine + H(+) = a 1,2-diacyl-sn-glycero-3-phosphoethanolamine + CO2</text>
        <dbReference type="Rhea" id="RHEA:20828"/>
        <dbReference type="ChEBI" id="CHEBI:15378"/>
        <dbReference type="ChEBI" id="CHEBI:16526"/>
        <dbReference type="ChEBI" id="CHEBI:57262"/>
        <dbReference type="ChEBI" id="CHEBI:64612"/>
        <dbReference type="EC" id="4.1.1.65"/>
    </reaction>
</comment>
<comment type="cofactor">
    <cofactor evidence="1">
        <name>pyruvate</name>
        <dbReference type="ChEBI" id="CHEBI:15361"/>
    </cofactor>
    <text evidence="1">Binds 1 pyruvoyl group covalently per subunit.</text>
</comment>
<comment type="pathway">
    <text evidence="1">Phospholipid metabolism; phosphatidylethanolamine biosynthesis; phosphatidylethanolamine from CDP-diacylglycerol: step 2/2.</text>
</comment>
<comment type="subunit">
    <text evidence="1">Heterodimer of a large membrane-associated beta subunit and a small pyruvoyl-containing alpha subunit.</text>
</comment>
<comment type="subcellular location">
    <subcellularLocation>
        <location evidence="1">Cell membrane</location>
        <topology evidence="1">Peripheral membrane protein</topology>
    </subcellularLocation>
</comment>
<comment type="PTM">
    <text evidence="1">Is synthesized initially as an inactive proenzyme. Formation of the active enzyme involves a self-maturation process in which the active site pyruvoyl group is generated from an internal serine residue via an autocatalytic post-translational modification. Two non-identical subunits are generated from the proenzyme in this reaction, and the pyruvate is formed at the N-terminus of the alpha chain, which is derived from the carboxyl end of the proenzyme. The autoendoproteolytic cleavage occurs by a canonical serine protease mechanism, in which the side chain hydroxyl group of the serine supplies its oxygen atom to form the C-terminus of the beta chain, while the remainder of the serine residue undergoes an oxidative deamination to produce ammonia and the pyruvoyl prosthetic group on the alpha chain. During this reaction, the Ser that is part of the protease active site of the proenzyme becomes the pyruvoyl prosthetic group, which constitutes an essential element of the active site of the mature decarboxylase.</text>
</comment>
<comment type="similarity">
    <text evidence="1">Belongs to the phosphatidylserine decarboxylase family. PSD-B subfamily. Prokaryotic type I sub-subfamily.</text>
</comment>
<evidence type="ECO:0000255" key="1">
    <source>
        <dbReference type="HAMAP-Rule" id="MF_00662"/>
    </source>
</evidence>
<organism>
    <name type="scientific">Shewanella baltica (strain OS155 / ATCC BAA-1091)</name>
    <dbReference type="NCBI Taxonomy" id="325240"/>
    <lineage>
        <taxon>Bacteria</taxon>
        <taxon>Pseudomonadati</taxon>
        <taxon>Pseudomonadota</taxon>
        <taxon>Gammaproteobacteria</taxon>
        <taxon>Alteromonadales</taxon>
        <taxon>Shewanellaceae</taxon>
        <taxon>Shewanella</taxon>
    </lineage>
</organism>
<reference key="1">
    <citation type="submission" date="2007-02" db="EMBL/GenBank/DDBJ databases">
        <title>Complete sequence of chromosome of Shewanella baltica OS155.</title>
        <authorList>
            <consortium name="US DOE Joint Genome Institute"/>
            <person name="Copeland A."/>
            <person name="Lucas S."/>
            <person name="Lapidus A."/>
            <person name="Barry K."/>
            <person name="Detter J.C."/>
            <person name="Glavina del Rio T."/>
            <person name="Hammon N."/>
            <person name="Israni S."/>
            <person name="Dalin E."/>
            <person name="Tice H."/>
            <person name="Pitluck S."/>
            <person name="Sims D.R."/>
            <person name="Brettin T."/>
            <person name="Bruce D."/>
            <person name="Han C."/>
            <person name="Tapia R."/>
            <person name="Brainard J."/>
            <person name="Schmutz J."/>
            <person name="Larimer F."/>
            <person name="Land M."/>
            <person name="Hauser L."/>
            <person name="Kyrpides N."/>
            <person name="Mikhailova N."/>
            <person name="Brettar I."/>
            <person name="Klappenbach J."/>
            <person name="Konstantinidis K."/>
            <person name="Rodrigues J."/>
            <person name="Tiedje J."/>
            <person name="Richardson P."/>
        </authorList>
    </citation>
    <scope>NUCLEOTIDE SEQUENCE [LARGE SCALE GENOMIC DNA]</scope>
    <source>
        <strain>OS155 / ATCC BAA-1091</strain>
    </source>
</reference>
<keyword id="KW-1003">Cell membrane</keyword>
<keyword id="KW-0210">Decarboxylase</keyword>
<keyword id="KW-0444">Lipid biosynthesis</keyword>
<keyword id="KW-0443">Lipid metabolism</keyword>
<keyword id="KW-0456">Lyase</keyword>
<keyword id="KW-0472">Membrane</keyword>
<keyword id="KW-0594">Phospholipid biosynthesis</keyword>
<keyword id="KW-1208">Phospholipid metabolism</keyword>
<keyword id="KW-0670">Pyruvate</keyword>
<keyword id="KW-1185">Reference proteome</keyword>
<keyword id="KW-0865">Zymogen</keyword>
<accession>A3D015</accession>
<protein>
    <recommendedName>
        <fullName evidence="1">Phosphatidylserine decarboxylase proenzyme</fullName>
        <ecNumber evidence="1">4.1.1.65</ecNumber>
    </recommendedName>
    <component>
        <recommendedName>
            <fullName evidence="1">Phosphatidylserine decarboxylase alpha chain</fullName>
        </recommendedName>
    </component>
    <component>
        <recommendedName>
            <fullName evidence="1">Phosphatidylserine decarboxylase beta chain</fullName>
        </recommendedName>
    </component>
</protein>
<feature type="chain" id="PRO_1000026580" description="Phosphatidylserine decarboxylase beta chain" evidence="1">
    <location>
        <begin position="1"/>
        <end position="251"/>
    </location>
</feature>
<feature type="chain" id="PRO_1000026581" description="Phosphatidylserine decarboxylase alpha chain" evidence="1">
    <location>
        <begin position="252"/>
        <end position="292"/>
    </location>
</feature>
<feature type="active site" description="Charge relay system; for autoendoproteolytic cleavage activity" evidence="1">
    <location>
        <position position="89"/>
    </location>
</feature>
<feature type="active site" description="Charge relay system; for autoendoproteolytic cleavage activity" evidence="1">
    <location>
        <position position="146"/>
    </location>
</feature>
<feature type="active site" description="Charge relay system; for autoendoproteolytic cleavage activity" evidence="1">
    <location>
        <position position="252"/>
    </location>
</feature>
<feature type="active site" description="Schiff-base intermediate with substrate; via pyruvic acid; for decarboxylase activity" evidence="1">
    <location>
        <position position="252"/>
    </location>
</feature>
<feature type="site" description="Cleavage (non-hydrolytic); by autocatalysis" evidence="1">
    <location>
        <begin position="251"/>
        <end position="252"/>
    </location>
</feature>
<feature type="modified residue" description="Pyruvic acid (Ser); by autocatalysis" evidence="1">
    <location>
        <position position="252"/>
    </location>
</feature>